<keyword id="KW-1185">Reference proteome</keyword>
<keyword id="KW-0687">Ribonucleoprotein</keyword>
<keyword id="KW-0689">Ribosomal protein</keyword>
<keyword id="KW-0694">RNA-binding</keyword>
<keyword id="KW-0699">rRNA-binding</keyword>
<reference key="1">
    <citation type="journal article" date="2011" name="J. Bacteriol.">
        <title>Complete genome and proteome of Acholeplasma laidlawii.</title>
        <authorList>
            <person name="Lazarev V.N."/>
            <person name="Levitskii S.A."/>
            <person name="Basovskii Y.I."/>
            <person name="Chukin M.M."/>
            <person name="Akopian T.A."/>
            <person name="Vereshchagin V.V."/>
            <person name="Kostrjukova E.S."/>
            <person name="Kovaleva G.Y."/>
            <person name="Kazanov M.D."/>
            <person name="Malko D.B."/>
            <person name="Vitreschak A.G."/>
            <person name="Sernova N.V."/>
            <person name="Gelfand M.S."/>
            <person name="Demina I.A."/>
            <person name="Serebryakova M.V."/>
            <person name="Galyamina M.A."/>
            <person name="Vtyurin N.N."/>
            <person name="Rogov S.I."/>
            <person name="Alexeev D.G."/>
            <person name="Ladygina V.G."/>
            <person name="Govorun V.M."/>
        </authorList>
    </citation>
    <scope>NUCLEOTIDE SEQUENCE [LARGE SCALE GENOMIC DNA]</scope>
    <source>
        <strain>PG-8A</strain>
    </source>
</reference>
<proteinExistence type="inferred from homology"/>
<dbReference type="EMBL" id="CP000896">
    <property type="protein sequence ID" value="ABX80819.1"/>
    <property type="molecule type" value="Genomic_DNA"/>
</dbReference>
<dbReference type="RefSeq" id="WP_012242150.1">
    <property type="nucleotide sequence ID" value="NC_010163.1"/>
</dbReference>
<dbReference type="SMR" id="A9NEN9"/>
<dbReference type="STRING" id="441768.ACL_0193"/>
<dbReference type="GeneID" id="41338384"/>
<dbReference type="KEGG" id="acl:ACL_0193"/>
<dbReference type="eggNOG" id="COG0360">
    <property type="taxonomic scope" value="Bacteria"/>
</dbReference>
<dbReference type="HOGENOM" id="CLU_113441_5_1_14"/>
<dbReference type="OrthoDB" id="9812702at2"/>
<dbReference type="Proteomes" id="UP000008558">
    <property type="component" value="Chromosome"/>
</dbReference>
<dbReference type="GO" id="GO:0005737">
    <property type="term" value="C:cytoplasm"/>
    <property type="evidence" value="ECO:0007669"/>
    <property type="project" value="UniProtKB-ARBA"/>
</dbReference>
<dbReference type="GO" id="GO:1990904">
    <property type="term" value="C:ribonucleoprotein complex"/>
    <property type="evidence" value="ECO:0007669"/>
    <property type="project" value="UniProtKB-KW"/>
</dbReference>
<dbReference type="GO" id="GO:0005840">
    <property type="term" value="C:ribosome"/>
    <property type="evidence" value="ECO:0007669"/>
    <property type="project" value="UniProtKB-KW"/>
</dbReference>
<dbReference type="GO" id="GO:0070181">
    <property type="term" value="F:small ribosomal subunit rRNA binding"/>
    <property type="evidence" value="ECO:0007669"/>
    <property type="project" value="TreeGrafter"/>
</dbReference>
<dbReference type="GO" id="GO:0003735">
    <property type="term" value="F:structural constituent of ribosome"/>
    <property type="evidence" value="ECO:0007669"/>
    <property type="project" value="InterPro"/>
</dbReference>
<dbReference type="GO" id="GO:0006412">
    <property type="term" value="P:translation"/>
    <property type="evidence" value="ECO:0007669"/>
    <property type="project" value="UniProtKB-UniRule"/>
</dbReference>
<dbReference type="CDD" id="cd00473">
    <property type="entry name" value="bS6"/>
    <property type="match status" value="1"/>
</dbReference>
<dbReference type="Gene3D" id="3.30.70.60">
    <property type="match status" value="1"/>
</dbReference>
<dbReference type="HAMAP" id="MF_00360">
    <property type="entry name" value="Ribosomal_bS6"/>
    <property type="match status" value="1"/>
</dbReference>
<dbReference type="InterPro" id="IPR000529">
    <property type="entry name" value="Ribosomal_bS6"/>
</dbReference>
<dbReference type="InterPro" id="IPR020815">
    <property type="entry name" value="Ribosomal_bS6_CS"/>
</dbReference>
<dbReference type="InterPro" id="IPR035980">
    <property type="entry name" value="Ribosomal_bS6_sf"/>
</dbReference>
<dbReference type="InterPro" id="IPR020814">
    <property type="entry name" value="Ribosomal_S6_plastid/chlpt"/>
</dbReference>
<dbReference type="InterPro" id="IPR014717">
    <property type="entry name" value="Transl_elong_EF1B/ribsomal_bS6"/>
</dbReference>
<dbReference type="NCBIfam" id="TIGR00166">
    <property type="entry name" value="S6"/>
    <property type="match status" value="1"/>
</dbReference>
<dbReference type="PANTHER" id="PTHR21011">
    <property type="entry name" value="MITOCHONDRIAL 28S RIBOSOMAL PROTEIN S6"/>
    <property type="match status" value="1"/>
</dbReference>
<dbReference type="PANTHER" id="PTHR21011:SF1">
    <property type="entry name" value="SMALL RIBOSOMAL SUBUNIT PROTEIN BS6M"/>
    <property type="match status" value="1"/>
</dbReference>
<dbReference type="Pfam" id="PF01250">
    <property type="entry name" value="Ribosomal_S6"/>
    <property type="match status" value="1"/>
</dbReference>
<dbReference type="SUPFAM" id="SSF54995">
    <property type="entry name" value="Ribosomal protein S6"/>
    <property type="match status" value="1"/>
</dbReference>
<dbReference type="PROSITE" id="PS01048">
    <property type="entry name" value="RIBOSOMAL_S6"/>
    <property type="match status" value="1"/>
</dbReference>
<protein>
    <recommendedName>
        <fullName evidence="1">Small ribosomal subunit protein bS6</fullName>
    </recommendedName>
    <alternativeName>
        <fullName evidence="2">30S ribosomal protein S6</fullName>
    </alternativeName>
</protein>
<sequence>MRKYELMYIANPQLDPEKLKGLVANLSNVITSNGGSVLSLKEIGLKDLAYEINKHRKGYYVWMLVEASPEAIAEYKRVVNITESVIRNIEVKEGE</sequence>
<evidence type="ECO:0000255" key="1">
    <source>
        <dbReference type="HAMAP-Rule" id="MF_00360"/>
    </source>
</evidence>
<evidence type="ECO:0000305" key="2"/>
<feature type="chain" id="PRO_1000079429" description="Small ribosomal subunit protein bS6">
    <location>
        <begin position="1"/>
        <end position="95"/>
    </location>
</feature>
<comment type="function">
    <text evidence="1">Binds together with bS18 to 16S ribosomal RNA.</text>
</comment>
<comment type="similarity">
    <text evidence="1">Belongs to the bacterial ribosomal protein bS6 family.</text>
</comment>
<organism>
    <name type="scientific">Acholeplasma laidlawii (strain PG-8A)</name>
    <dbReference type="NCBI Taxonomy" id="441768"/>
    <lineage>
        <taxon>Bacteria</taxon>
        <taxon>Bacillati</taxon>
        <taxon>Mycoplasmatota</taxon>
        <taxon>Mollicutes</taxon>
        <taxon>Acholeplasmatales</taxon>
        <taxon>Acholeplasmataceae</taxon>
        <taxon>Acholeplasma</taxon>
    </lineage>
</organism>
<accession>A9NEN9</accession>
<name>RS6_ACHLI</name>
<gene>
    <name evidence="1" type="primary">rpsF</name>
    <name type="ordered locus">ACL_0193</name>
</gene>